<accession>Q9PNI9</accession>
<accession>Q0P9E9</accession>
<dbReference type="EMBL" id="AL111168">
    <property type="protein sequence ID" value="CAL35222.1"/>
    <property type="molecule type" value="Genomic_DNA"/>
</dbReference>
<dbReference type="PIR" id="D81314">
    <property type="entry name" value="D81314"/>
</dbReference>
<dbReference type="RefSeq" id="WP_002852861.1">
    <property type="nucleotide sequence ID" value="NZ_SZUC01000001.1"/>
</dbReference>
<dbReference type="RefSeq" id="YP_002344498.1">
    <property type="nucleotide sequence ID" value="NC_002163.1"/>
</dbReference>
<dbReference type="SMR" id="Q9PNI9"/>
<dbReference type="STRING" id="192222.Cj1105"/>
<dbReference type="PaxDb" id="192222-Cj1105"/>
<dbReference type="EnsemblBacteria" id="CAL35222">
    <property type="protein sequence ID" value="CAL35222"/>
    <property type="gene ID" value="Cj1105"/>
</dbReference>
<dbReference type="GeneID" id="905396"/>
<dbReference type="KEGG" id="cje:Cj1105"/>
<dbReference type="PATRIC" id="fig|192222.6.peg.1087"/>
<dbReference type="eggNOG" id="COG0691">
    <property type="taxonomic scope" value="Bacteria"/>
</dbReference>
<dbReference type="HOGENOM" id="CLU_108953_3_1_7"/>
<dbReference type="OrthoDB" id="9805462at2"/>
<dbReference type="Proteomes" id="UP000000799">
    <property type="component" value="Chromosome"/>
</dbReference>
<dbReference type="GO" id="GO:0005829">
    <property type="term" value="C:cytosol"/>
    <property type="evidence" value="ECO:0007669"/>
    <property type="project" value="TreeGrafter"/>
</dbReference>
<dbReference type="GO" id="GO:0003723">
    <property type="term" value="F:RNA binding"/>
    <property type="evidence" value="ECO:0007669"/>
    <property type="project" value="UniProtKB-UniRule"/>
</dbReference>
<dbReference type="GO" id="GO:0070929">
    <property type="term" value="P:trans-translation"/>
    <property type="evidence" value="ECO:0007669"/>
    <property type="project" value="UniProtKB-UniRule"/>
</dbReference>
<dbReference type="CDD" id="cd09294">
    <property type="entry name" value="SmpB"/>
    <property type="match status" value="1"/>
</dbReference>
<dbReference type="Gene3D" id="2.40.280.10">
    <property type="match status" value="1"/>
</dbReference>
<dbReference type="HAMAP" id="MF_00023">
    <property type="entry name" value="SmpB"/>
    <property type="match status" value="1"/>
</dbReference>
<dbReference type="InterPro" id="IPR023620">
    <property type="entry name" value="SmpB"/>
</dbReference>
<dbReference type="InterPro" id="IPR000037">
    <property type="entry name" value="SsrA-bd_prot"/>
</dbReference>
<dbReference type="NCBIfam" id="NF003843">
    <property type="entry name" value="PRK05422.1"/>
    <property type="match status" value="1"/>
</dbReference>
<dbReference type="NCBIfam" id="TIGR00086">
    <property type="entry name" value="smpB"/>
    <property type="match status" value="1"/>
</dbReference>
<dbReference type="PANTHER" id="PTHR30308:SF2">
    <property type="entry name" value="SSRA-BINDING PROTEIN"/>
    <property type="match status" value="1"/>
</dbReference>
<dbReference type="PANTHER" id="PTHR30308">
    <property type="entry name" value="TMRNA-BINDING COMPONENT OF TRANS-TRANSLATION TAGGING COMPLEX"/>
    <property type="match status" value="1"/>
</dbReference>
<dbReference type="Pfam" id="PF01668">
    <property type="entry name" value="SmpB"/>
    <property type="match status" value="1"/>
</dbReference>
<dbReference type="SUPFAM" id="SSF74982">
    <property type="entry name" value="Small protein B (SmpB)"/>
    <property type="match status" value="1"/>
</dbReference>
<evidence type="ECO:0000255" key="1">
    <source>
        <dbReference type="HAMAP-Rule" id="MF_00023"/>
    </source>
</evidence>
<proteinExistence type="inferred from homology"/>
<sequence>MKIIARNKKALFDYSIIERFEAGIVLKGSEVVALRAGRANLKDSFVRIIKNEIFLLNSHISLLHTTHSFYKHEERGARKLLMHRKQIDKLLGKVSIEGYTIVALDLYFNTKNKVKATLALAKGKNLHDKRETLKKKQADLEARAAMKNYK</sequence>
<comment type="function">
    <text evidence="1">Required for rescue of stalled ribosomes mediated by trans-translation. Binds to transfer-messenger RNA (tmRNA), required for stable association of tmRNA with ribosomes. tmRNA and SmpB together mimic tRNA shape, replacing the anticodon stem-loop with SmpB. tmRNA is encoded by the ssrA gene; the 2 termini fold to resemble tRNA(Ala) and it encodes a 'tag peptide', a short internal open reading frame. During trans-translation Ala-aminoacylated tmRNA acts like a tRNA, entering the A-site of stalled ribosomes, displacing the stalled mRNA. The ribosome then switches to translate the ORF on the tmRNA; the nascent peptide is terminated with the 'tag peptide' encoded by the tmRNA and targeted for degradation. The ribosome is freed to recommence translation, which seems to be the essential function of trans-translation.</text>
</comment>
<comment type="subcellular location">
    <subcellularLocation>
        <location evidence="1">Cytoplasm</location>
    </subcellularLocation>
    <text evidence="1">The tmRNA-SmpB complex associates with stalled 70S ribosomes.</text>
</comment>
<comment type="similarity">
    <text evidence="1">Belongs to the SmpB family.</text>
</comment>
<gene>
    <name evidence="1" type="primary">smpB</name>
    <name type="ordered locus">Cj1105</name>
</gene>
<organism>
    <name type="scientific">Campylobacter jejuni subsp. jejuni serotype O:2 (strain ATCC 700819 / NCTC 11168)</name>
    <dbReference type="NCBI Taxonomy" id="192222"/>
    <lineage>
        <taxon>Bacteria</taxon>
        <taxon>Pseudomonadati</taxon>
        <taxon>Campylobacterota</taxon>
        <taxon>Epsilonproteobacteria</taxon>
        <taxon>Campylobacterales</taxon>
        <taxon>Campylobacteraceae</taxon>
        <taxon>Campylobacter</taxon>
    </lineage>
</organism>
<keyword id="KW-0963">Cytoplasm</keyword>
<keyword id="KW-1185">Reference proteome</keyword>
<keyword id="KW-0694">RNA-binding</keyword>
<feature type="chain" id="PRO_0000102925" description="SsrA-binding protein">
    <location>
        <begin position="1"/>
        <end position="150"/>
    </location>
</feature>
<protein>
    <recommendedName>
        <fullName evidence="1">SsrA-binding protein</fullName>
    </recommendedName>
    <alternativeName>
        <fullName evidence="1">Small protein B</fullName>
    </alternativeName>
</protein>
<reference key="1">
    <citation type="journal article" date="2000" name="Nature">
        <title>The genome sequence of the food-borne pathogen Campylobacter jejuni reveals hypervariable sequences.</title>
        <authorList>
            <person name="Parkhill J."/>
            <person name="Wren B.W."/>
            <person name="Mungall K.L."/>
            <person name="Ketley J.M."/>
            <person name="Churcher C.M."/>
            <person name="Basham D."/>
            <person name="Chillingworth T."/>
            <person name="Davies R.M."/>
            <person name="Feltwell T."/>
            <person name="Holroyd S."/>
            <person name="Jagels K."/>
            <person name="Karlyshev A.V."/>
            <person name="Moule S."/>
            <person name="Pallen M.J."/>
            <person name="Penn C.W."/>
            <person name="Quail M.A."/>
            <person name="Rajandream M.A."/>
            <person name="Rutherford K.M."/>
            <person name="van Vliet A.H.M."/>
            <person name="Whitehead S."/>
            <person name="Barrell B.G."/>
        </authorList>
    </citation>
    <scope>NUCLEOTIDE SEQUENCE [LARGE SCALE GENOMIC DNA]</scope>
    <source>
        <strain>ATCC 700819 / NCTC 11168</strain>
    </source>
</reference>
<name>SSRP_CAMJE</name>